<organism>
    <name type="scientific">Methanosarcina acetivorans (strain ATCC 35395 / DSM 2834 / JCM 12185 / C2A)</name>
    <dbReference type="NCBI Taxonomy" id="188937"/>
    <lineage>
        <taxon>Archaea</taxon>
        <taxon>Methanobacteriati</taxon>
        <taxon>Methanobacteriota</taxon>
        <taxon>Stenosarchaea group</taxon>
        <taxon>Methanomicrobia</taxon>
        <taxon>Methanosarcinales</taxon>
        <taxon>Methanosarcinaceae</taxon>
        <taxon>Methanosarcina</taxon>
    </lineage>
</organism>
<gene>
    <name evidence="1" type="primary">fusA</name>
    <name type="synonym">ef2</name>
    <name type="ordered locus">MA_1257</name>
</gene>
<evidence type="ECO:0000255" key="1">
    <source>
        <dbReference type="HAMAP-Rule" id="MF_00054"/>
    </source>
</evidence>
<keyword id="KW-0963">Cytoplasm</keyword>
<keyword id="KW-0251">Elongation factor</keyword>
<keyword id="KW-0342">GTP-binding</keyword>
<keyword id="KW-0547">Nucleotide-binding</keyword>
<keyword id="KW-0648">Protein biosynthesis</keyword>
<keyword id="KW-1185">Reference proteome</keyword>
<comment type="function">
    <text evidence="1">Catalyzes the GTP-dependent ribosomal translocation step during translation elongation. During this step, the ribosome changes from the pre-translocational (PRE) to the post-translocational (POST) state as the newly formed A-site-bound peptidyl-tRNA and P-site-bound deacylated tRNA move to the P and E sites, respectively. Catalyzes the coordinated movement of the two tRNA molecules, the mRNA and conformational changes in the ribosome.</text>
</comment>
<comment type="subcellular location">
    <subcellularLocation>
        <location evidence="1">Cytoplasm</location>
    </subcellularLocation>
</comment>
<comment type="similarity">
    <text evidence="1">Belongs to the TRAFAC class translation factor GTPase superfamily. Classic translation factor GTPase family. EF-G/EF-2 subfamily.</text>
</comment>
<protein>
    <recommendedName>
        <fullName evidence="1">Elongation factor 2</fullName>
        <shortName evidence="1">EF-2</shortName>
    </recommendedName>
</protein>
<name>EF2_METAC</name>
<accession>Q8TRC3</accession>
<feature type="chain" id="PRO_0000091030" description="Elongation factor 2">
    <location>
        <begin position="1"/>
        <end position="730"/>
    </location>
</feature>
<feature type="domain" description="tr-type G">
    <location>
        <begin position="19"/>
        <end position="228"/>
    </location>
</feature>
<feature type="binding site" evidence="1">
    <location>
        <begin position="28"/>
        <end position="35"/>
    </location>
    <ligand>
        <name>GTP</name>
        <dbReference type="ChEBI" id="CHEBI:37565"/>
    </ligand>
</feature>
<feature type="binding site" evidence="1">
    <location>
        <begin position="94"/>
        <end position="98"/>
    </location>
    <ligand>
        <name>GTP</name>
        <dbReference type="ChEBI" id="CHEBI:37565"/>
    </ligand>
</feature>
<feature type="binding site" evidence="1">
    <location>
        <begin position="148"/>
        <end position="151"/>
    </location>
    <ligand>
        <name>GTP</name>
        <dbReference type="ChEBI" id="CHEBI:37565"/>
    </ligand>
</feature>
<feature type="modified residue" description="Diphthamide" evidence="1">
    <location>
        <position position="596"/>
    </location>
</feature>
<proteinExistence type="inferred from homology"/>
<dbReference type="EMBL" id="AE010299">
    <property type="protein sequence ID" value="AAM04676.1"/>
    <property type="molecule type" value="Genomic_DNA"/>
</dbReference>
<dbReference type="RefSeq" id="WP_011021278.1">
    <property type="nucleotide sequence ID" value="NC_003552.1"/>
</dbReference>
<dbReference type="SMR" id="Q8TRC3"/>
<dbReference type="FunCoup" id="Q8TRC3">
    <property type="interactions" value="202"/>
</dbReference>
<dbReference type="STRING" id="188937.MA_1257"/>
<dbReference type="EnsemblBacteria" id="AAM04676">
    <property type="protein sequence ID" value="AAM04676"/>
    <property type="gene ID" value="MA_1257"/>
</dbReference>
<dbReference type="GeneID" id="1473145"/>
<dbReference type="KEGG" id="mac:MA_1257"/>
<dbReference type="HOGENOM" id="CLU_002794_11_1_2"/>
<dbReference type="InParanoid" id="Q8TRC3"/>
<dbReference type="OrthoDB" id="6290at2157"/>
<dbReference type="PhylomeDB" id="Q8TRC3"/>
<dbReference type="Proteomes" id="UP000002487">
    <property type="component" value="Chromosome"/>
</dbReference>
<dbReference type="GO" id="GO:0005829">
    <property type="term" value="C:cytosol"/>
    <property type="evidence" value="ECO:0000318"/>
    <property type="project" value="GO_Central"/>
</dbReference>
<dbReference type="GO" id="GO:1990904">
    <property type="term" value="C:ribonucleoprotein complex"/>
    <property type="evidence" value="ECO:0000318"/>
    <property type="project" value="GO_Central"/>
</dbReference>
<dbReference type="GO" id="GO:0005525">
    <property type="term" value="F:GTP binding"/>
    <property type="evidence" value="ECO:0007669"/>
    <property type="project" value="UniProtKB-UniRule"/>
</dbReference>
<dbReference type="GO" id="GO:0003924">
    <property type="term" value="F:GTPase activity"/>
    <property type="evidence" value="ECO:0000318"/>
    <property type="project" value="GO_Central"/>
</dbReference>
<dbReference type="GO" id="GO:0003746">
    <property type="term" value="F:translation elongation factor activity"/>
    <property type="evidence" value="ECO:0000318"/>
    <property type="project" value="GO_Central"/>
</dbReference>
<dbReference type="GO" id="GO:0006414">
    <property type="term" value="P:translational elongation"/>
    <property type="evidence" value="ECO:0000318"/>
    <property type="project" value="GO_Central"/>
</dbReference>
<dbReference type="CDD" id="cd01681">
    <property type="entry name" value="aeEF2_snRNP_like_IV"/>
    <property type="match status" value="1"/>
</dbReference>
<dbReference type="CDD" id="cd16268">
    <property type="entry name" value="EF2_II"/>
    <property type="match status" value="1"/>
</dbReference>
<dbReference type="CDD" id="cd16261">
    <property type="entry name" value="EF2_snRNP_III"/>
    <property type="match status" value="1"/>
</dbReference>
<dbReference type="CDD" id="cd01514">
    <property type="entry name" value="Elongation_Factor_C"/>
    <property type="match status" value="1"/>
</dbReference>
<dbReference type="FunFam" id="3.30.230.10:FF:000009">
    <property type="entry name" value="116 kDa U5 small nuclear ribonucleoprotein component"/>
    <property type="match status" value="1"/>
</dbReference>
<dbReference type="FunFam" id="2.40.30.10:FF:000110">
    <property type="entry name" value="Elongation factor 2"/>
    <property type="match status" value="1"/>
</dbReference>
<dbReference type="FunFam" id="3.30.70.240:FF:000010">
    <property type="entry name" value="Elongation factor 2"/>
    <property type="match status" value="1"/>
</dbReference>
<dbReference type="FunFam" id="3.40.50.300:FF:000684">
    <property type="entry name" value="Elongation factor 2"/>
    <property type="match status" value="1"/>
</dbReference>
<dbReference type="FunFam" id="3.30.70.870:FF:000002">
    <property type="entry name" value="Translation elongation factor 2"/>
    <property type="match status" value="1"/>
</dbReference>
<dbReference type="Gene3D" id="3.30.230.10">
    <property type="match status" value="1"/>
</dbReference>
<dbReference type="Gene3D" id="3.30.70.240">
    <property type="match status" value="1"/>
</dbReference>
<dbReference type="Gene3D" id="3.30.70.870">
    <property type="entry name" value="Elongation Factor G (Translational Gtpase), domain 3"/>
    <property type="match status" value="1"/>
</dbReference>
<dbReference type="Gene3D" id="3.40.50.300">
    <property type="entry name" value="P-loop containing nucleotide triphosphate hydrolases"/>
    <property type="match status" value="1"/>
</dbReference>
<dbReference type="Gene3D" id="2.40.30.10">
    <property type="entry name" value="Translation factors"/>
    <property type="match status" value="1"/>
</dbReference>
<dbReference type="HAMAP" id="MF_00054_A">
    <property type="entry name" value="EF_G_EF_2_A"/>
    <property type="match status" value="1"/>
</dbReference>
<dbReference type="InterPro" id="IPR041095">
    <property type="entry name" value="EFG_II"/>
</dbReference>
<dbReference type="InterPro" id="IPR035647">
    <property type="entry name" value="EFG_III/V"/>
</dbReference>
<dbReference type="InterPro" id="IPR000640">
    <property type="entry name" value="EFG_V-like"/>
</dbReference>
<dbReference type="InterPro" id="IPR004161">
    <property type="entry name" value="EFTu-like_2"/>
</dbReference>
<dbReference type="InterPro" id="IPR031157">
    <property type="entry name" value="G_TR_CS"/>
</dbReference>
<dbReference type="InterPro" id="IPR027417">
    <property type="entry name" value="P-loop_NTPase"/>
</dbReference>
<dbReference type="InterPro" id="IPR020568">
    <property type="entry name" value="Ribosomal_Su5_D2-typ_SF"/>
</dbReference>
<dbReference type="InterPro" id="IPR014721">
    <property type="entry name" value="Ribsml_uS5_D2-typ_fold_subgr"/>
</dbReference>
<dbReference type="InterPro" id="IPR005225">
    <property type="entry name" value="Small_GTP-bd"/>
</dbReference>
<dbReference type="InterPro" id="IPR000795">
    <property type="entry name" value="T_Tr_GTP-bd_dom"/>
</dbReference>
<dbReference type="InterPro" id="IPR009000">
    <property type="entry name" value="Transl_B-barrel_sf"/>
</dbReference>
<dbReference type="InterPro" id="IPR004543">
    <property type="entry name" value="Transl_elong_EFG/EF2_arc"/>
</dbReference>
<dbReference type="InterPro" id="IPR005517">
    <property type="entry name" value="Transl_elong_EFG/EF2_IV"/>
</dbReference>
<dbReference type="NCBIfam" id="TIGR00490">
    <property type="entry name" value="aEF-2"/>
    <property type="match status" value="1"/>
</dbReference>
<dbReference type="NCBIfam" id="TIGR00231">
    <property type="entry name" value="small_GTP"/>
    <property type="match status" value="1"/>
</dbReference>
<dbReference type="PANTHER" id="PTHR42908:SF3">
    <property type="entry name" value="ELONGATION FACTOR-LIKE GTPASE 1"/>
    <property type="match status" value="1"/>
</dbReference>
<dbReference type="PANTHER" id="PTHR42908">
    <property type="entry name" value="TRANSLATION ELONGATION FACTOR-RELATED"/>
    <property type="match status" value="1"/>
</dbReference>
<dbReference type="Pfam" id="PF00679">
    <property type="entry name" value="EFG_C"/>
    <property type="match status" value="1"/>
</dbReference>
<dbReference type="Pfam" id="PF14492">
    <property type="entry name" value="EFG_III"/>
    <property type="match status" value="1"/>
</dbReference>
<dbReference type="Pfam" id="PF03764">
    <property type="entry name" value="EFG_IV"/>
    <property type="match status" value="1"/>
</dbReference>
<dbReference type="Pfam" id="PF00009">
    <property type="entry name" value="GTP_EFTU"/>
    <property type="match status" value="1"/>
</dbReference>
<dbReference type="Pfam" id="PF03144">
    <property type="entry name" value="GTP_EFTU_D2"/>
    <property type="match status" value="1"/>
</dbReference>
<dbReference type="PRINTS" id="PR00315">
    <property type="entry name" value="ELONGATNFCT"/>
</dbReference>
<dbReference type="SMART" id="SM00838">
    <property type="entry name" value="EFG_C"/>
    <property type="match status" value="1"/>
</dbReference>
<dbReference type="SMART" id="SM00889">
    <property type="entry name" value="EFG_IV"/>
    <property type="match status" value="1"/>
</dbReference>
<dbReference type="SUPFAM" id="SSF54980">
    <property type="entry name" value="EF-G C-terminal domain-like"/>
    <property type="match status" value="2"/>
</dbReference>
<dbReference type="SUPFAM" id="SSF52540">
    <property type="entry name" value="P-loop containing nucleoside triphosphate hydrolases"/>
    <property type="match status" value="1"/>
</dbReference>
<dbReference type="SUPFAM" id="SSF54211">
    <property type="entry name" value="Ribosomal protein S5 domain 2-like"/>
    <property type="match status" value="1"/>
</dbReference>
<dbReference type="SUPFAM" id="SSF50447">
    <property type="entry name" value="Translation proteins"/>
    <property type="match status" value="1"/>
</dbReference>
<dbReference type="PROSITE" id="PS00301">
    <property type="entry name" value="G_TR_1"/>
    <property type="match status" value="1"/>
</dbReference>
<dbReference type="PROSITE" id="PS51722">
    <property type="entry name" value="G_TR_2"/>
    <property type="match status" value="1"/>
</dbReference>
<sequence>MGRRKKMVERVTTLMNDPQRIRNIGIVAHIDHGKTTLSDNLLAGAGMISKELAGKQLFMDSDEEEQARGITIDSSNVSMVHTFDNEDYLINLIDTPGHVDFGGDVTRAMRAVDGAVVVVDAVEGTMPQTETVLRQALREHVRPVLFVNKVDRLINELQVDSQEMQIRLGKVIDHVNKLIKNMNPEKFKAGWKVDAAAGTVAFGSALYNWAISVPMMKKTGVSFKDVYDYCKAGDMKSLAEKCPLHEAVLDMVIHFLPNPIEAQKGRVKVIWHGDENTEIGKAMTHANAEGDLAFMVTDISVDPHAGEVATGRLFSGSLTRGMEVFTSGSARKSRVQQVGIFMGPERLEVDKIPAGNIAAVTGLKEAIVGSTVTTLDGMTPFESIRHVSEPVVTVAVEAKHTKDLPKLIEVLRQVAKEDPTLQITLDEETGEHLMAGMGELHLEVIAHRIERDKNVEITTSKPIVVYRETIKKKTEPIEGKSPNRHNRFYIYAEPLDTEIVSAIKEGEVSMNLPELERRQKLIDLGMEKEEAKGIVGIFNSNIFIDMTKGIQYLNETMELVLDGFEEVMRAGPLTREPVANVKCVLVDAKLHEDAIHRGPAQIIPAARQAIQAGMLMAEDSLLEPYQKVFVQVPQLLMGGATKELQGRRGIILNMTTEGDLAIIEARVPVAEMFGFAGEIRSATEGRAMWSTEFGGFDVVPSSILNDIVGQIRERKGLKKELPKASDFLSM</sequence>
<reference key="1">
    <citation type="journal article" date="2002" name="Genome Res.">
        <title>The genome of Methanosarcina acetivorans reveals extensive metabolic and physiological diversity.</title>
        <authorList>
            <person name="Galagan J.E."/>
            <person name="Nusbaum C."/>
            <person name="Roy A."/>
            <person name="Endrizzi M.G."/>
            <person name="Macdonald P."/>
            <person name="FitzHugh W."/>
            <person name="Calvo S."/>
            <person name="Engels R."/>
            <person name="Smirnov S."/>
            <person name="Atnoor D."/>
            <person name="Brown A."/>
            <person name="Allen N."/>
            <person name="Naylor J."/>
            <person name="Stange-Thomann N."/>
            <person name="DeArellano K."/>
            <person name="Johnson R."/>
            <person name="Linton L."/>
            <person name="McEwan P."/>
            <person name="McKernan K."/>
            <person name="Talamas J."/>
            <person name="Tirrell A."/>
            <person name="Ye W."/>
            <person name="Zimmer A."/>
            <person name="Barber R.D."/>
            <person name="Cann I."/>
            <person name="Graham D.E."/>
            <person name="Grahame D.A."/>
            <person name="Guss A.M."/>
            <person name="Hedderich R."/>
            <person name="Ingram-Smith C."/>
            <person name="Kuettner H.C."/>
            <person name="Krzycki J.A."/>
            <person name="Leigh J.A."/>
            <person name="Li W."/>
            <person name="Liu J."/>
            <person name="Mukhopadhyay B."/>
            <person name="Reeve J.N."/>
            <person name="Smith K."/>
            <person name="Springer T.A."/>
            <person name="Umayam L.A."/>
            <person name="White O."/>
            <person name="White R.H."/>
            <person name="de Macario E.C."/>
            <person name="Ferry J.G."/>
            <person name="Jarrell K.F."/>
            <person name="Jing H."/>
            <person name="Macario A.J.L."/>
            <person name="Paulsen I.T."/>
            <person name="Pritchett M."/>
            <person name="Sowers K.R."/>
            <person name="Swanson R.V."/>
            <person name="Zinder S.H."/>
            <person name="Lander E."/>
            <person name="Metcalf W.W."/>
            <person name="Birren B."/>
        </authorList>
    </citation>
    <scope>NUCLEOTIDE SEQUENCE [LARGE SCALE GENOMIC DNA]</scope>
    <source>
        <strain>ATCC 35395 / DSM 2834 / JCM 12185 / C2A</strain>
    </source>
</reference>